<organism>
    <name type="scientific">Streptomyces ramocissimus</name>
    <dbReference type="NCBI Taxonomy" id="1925"/>
    <lineage>
        <taxon>Bacteria</taxon>
        <taxon>Bacillati</taxon>
        <taxon>Actinomycetota</taxon>
        <taxon>Actinomycetes</taxon>
        <taxon>Kitasatosporales</taxon>
        <taxon>Streptomycetaceae</taxon>
        <taxon>Streptomyces</taxon>
    </lineage>
</organism>
<protein>
    <recommendedName>
        <fullName>Elongation factor G</fullName>
        <shortName>EF-G</shortName>
    </recommendedName>
</protein>
<dbReference type="EMBL" id="X67057">
    <property type="protein sequence ID" value="CAA47441.1"/>
    <property type="molecule type" value="Genomic_DNA"/>
</dbReference>
<dbReference type="PIR" id="S23907">
    <property type="entry name" value="S23907"/>
</dbReference>
<dbReference type="SMR" id="P29541"/>
<dbReference type="GO" id="GO:0005737">
    <property type="term" value="C:cytoplasm"/>
    <property type="evidence" value="ECO:0007669"/>
    <property type="project" value="UniProtKB-SubCell"/>
</dbReference>
<dbReference type="GO" id="GO:0005525">
    <property type="term" value="F:GTP binding"/>
    <property type="evidence" value="ECO:0007669"/>
    <property type="project" value="UniProtKB-KW"/>
</dbReference>
<dbReference type="GO" id="GO:0003746">
    <property type="term" value="F:translation elongation factor activity"/>
    <property type="evidence" value="ECO:0007669"/>
    <property type="project" value="UniProtKB-KW"/>
</dbReference>
<dbReference type="GO" id="GO:0032790">
    <property type="term" value="P:ribosome disassembly"/>
    <property type="evidence" value="ECO:0007669"/>
    <property type="project" value="TreeGrafter"/>
</dbReference>
<dbReference type="CDD" id="cd16262">
    <property type="entry name" value="EFG_III"/>
    <property type="match status" value="1"/>
</dbReference>
<dbReference type="CDD" id="cd01434">
    <property type="entry name" value="EFG_mtEFG1_IV"/>
    <property type="match status" value="1"/>
</dbReference>
<dbReference type="CDD" id="cd03713">
    <property type="entry name" value="EFG_mtEFG_C"/>
    <property type="match status" value="1"/>
</dbReference>
<dbReference type="FunFam" id="3.30.230.10:FF:000003">
    <property type="entry name" value="Elongation factor G"/>
    <property type="match status" value="1"/>
</dbReference>
<dbReference type="FunFam" id="3.30.70.240:FF:000001">
    <property type="entry name" value="Elongation factor G"/>
    <property type="match status" value="1"/>
</dbReference>
<dbReference type="FunFam" id="3.30.70.870:FF:000001">
    <property type="entry name" value="Elongation factor G"/>
    <property type="match status" value="1"/>
</dbReference>
<dbReference type="Gene3D" id="3.30.230.10">
    <property type="match status" value="1"/>
</dbReference>
<dbReference type="Gene3D" id="3.30.70.240">
    <property type="match status" value="1"/>
</dbReference>
<dbReference type="Gene3D" id="3.30.70.870">
    <property type="entry name" value="Elongation Factor G (Translational Gtpase), domain 3"/>
    <property type="match status" value="1"/>
</dbReference>
<dbReference type="Gene3D" id="2.40.30.10">
    <property type="entry name" value="Translation factors"/>
    <property type="match status" value="1"/>
</dbReference>
<dbReference type="InterPro" id="IPR041095">
    <property type="entry name" value="EFG_II"/>
</dbReference>
<dbReference type="InterPro" id="IPR009022">
    <property type="entry name" value="EFG_III"/>
</dbReference>
<dbReference type="InterPro" id="IPR035647">
    <property type="entry name" value="EFG_III/V"/>
</dbReference>
<dbReference type="InterPro" id="IPR047872">
    <property type="entry name" value="EFG_IV"/>
</dbReference>
<dbReference type="InterPro" id="IPR035649">
    <property type="entry name" value="EFG_V"/>
</dbReference>
<dbReference type="InterPro" id="IPR000640">
    <property type="entry name" value="EFG_V-like"/>
</dbReference>
<dbReference type="InterPro" id="IPR020568">
    <property type="entry name" value="Ribosomal_Su5_D2-typ_SF"/>
</dbReference>
<dbReference type="InterPro" id="IPR014721">
    <property type="entry name" value="Ribsml_uS5_D2-typ_fold_subgr"/>
</dbReference>
<dbReference type="InterPro" id="IPR009000">
    <property type="entry name" value="Transl_B-barrel_sf"/>
</dbReference>
<dbReference type="InterPro" id="IPR005517">
    <property type="entry name" value="Transl_elong_EFG/EF2_IV"/>
</dbReference>
<dbReference type="PANTHER" id="PTHR43261:SF1">
    <property type="entry name" value="RIBOSOME-RELEASING FACTOR 2, MITOCHONDRIAL"/>
    <property type="match status" value="1"/>
</dbReference>
<dbReference type="PANTHER" id="PTHR43261">
    <property type="entry name" value="TRANSLATION ELONGATION FACTOR G-RELATED"/>
    <property type="match status" value="1"/>
</dbReference>
<dbReference type="Pfam" id="PF00679">
    <property type="entry name" value="EFG_C"/>
    <property type="match status" value="1"/>
</dbReference>
<dbReference type="Pfam" id="PF14492">
    <property type="entry name" value="EFG_III"/>
    <property type="match status" value="1"/>
</dbReference>
<dbReference type="Pfam" id="PF03764">
    <property type="entry name" value="EFG_IV"/>
    <property type="match status" value="1"/>
</dbReference>
<dbReference type="SMART" id="SM00838">
    <property type="entry name" value="EFG_C"/>
    <property type="match status" value="1"/>
</dbReference>
<dbReference type="SMART" id="SM00889">
    <property type="entry name" value="EFG_IV"/>
    <property type="match status" value="1"/>
</dbReference>
<dbReference type="SUPFAM" id="SSF54980">
    <property type="entry name" value="EF-G C-terminal domain-like"/>
    <property type="match status" value="2"/>
</dbReference>
<dbReference type="SUPFAM" id="SSF54211">
    <property type="entry name" value="Ribosomal protein S5 domain 2-like"/>
    <property type="match status" value="1"/>
</dbReference>
<dbReference type="SUPFAM" id="SSF50447">
    <property type="entry name" value="Translation proteins"/>
    <property type="match status" value="1"/>
</dbReference>
<gene>
    <name type="primary">fus</name>
</gene>
<sequence length="341" mass="37322">IYRMHANKREEIESVGAGDIVAVMGLKQTTTGETLSDEKSPVILESMDFPAPVIQVAIEPKSKGDQEKLGVAIQRLAEEDPSFQVHSDEETGQTIIGGMGELHLEVLVDRMRREFKVEANVGKPQVAYRETIRQAVEKVEYTHKKQTGGTGQFARVIIAIEPIESGDTSYEFVNKVTGGRVPKEYIPSVDAGAQEAMQFGILAGYEMTGVRVTLLDGAYHEVDSSELAFKIAGSQAFKEAARKAKPVLLEPMMAVEVTTPEDYMGEVIGDINSRRGQIQAMEERAGARVVKGLVPLSEMFGYVGDLRSKTSGRASYSMQFDSYAEVPRNVAEEIIAKAKGE</sequence>
<keyword id="KW-0963">Cytoplasm</keyword>
<keyword id="KW-0251">Elongation factor</keyword>
<keyword id="KW-0342">GTP-binding</keyword>
<keyword id="KW-0547">Nucleotide-binding</keyword>
<keyword id="KW-0648">Protein biosynthesis</keyword>
<reference key="1">
    <citation type="journal article" date="1994" name="Microbiology">
        <title>Three tuf-like genes in the kirromycin producer Streptomyces ramocissimus.</title>
        <authorList>
            <person name="Vijgenboom E."/>
            <person name="Woudt L.P."/>
            <person name="Heinstra P.W.H."/>
            <person name="Rietveld K."/>
            <person name="van Haarlem J."/>
            <person name="van Wezel G.P."/>
            <person name="Shochat S."/>
            <person name="Bosch L."/>
        </authorList>
    </citation>
    <scope>NUCLEOTIDE SEQUENCE [GENOMIC DNA]</scope>
</reference>
<accession>P29541</accession>
<evidence type="ECO:0000250" key="1"/>
<evidence type="ECO:0000305" key="2"/>
<feature type="chain" id="PRO_0000091236" description="Elongation factor G">
    <location>
        <begin position="1" status="less than"/>
        <end position="341"/>
    </location>
</feature>
<feature type="non-terminal residue">
    <location>
        <position position="1"/>
    </location>
</feature>
<proteinExistence type="inferred from homology"/>
<comment type="function">
    <text evidence="1">Catalyzes the GTP-dependent ribosomal translocation step during translation elongation. During this step, the ribosome changes from the pre-translocational (PRE) to the post-translocational (POST) state as the newly formed A-site-bound peptidyl-tRNA and P-site-bound deacylated tRNA move to the P and E sites, respectively. Catalyzes the coordinated movement of the two tRNA molecules, the mRNA and conformational changes in the ribosome (By similarity).</text>
</comment>
<comment type="subcellular location">
    <subcellularLocation>
        <location evidence="1">Cytoplasm</location>
    </subcellularLocation>
</comment>
<comment type="similarity">
    <text evidence="2">Belongs to the GTP-binding elongation factor family. EF-G/EF-2 subfamily.</text>
</comment>
<name>EFG_STRRA</name>